<sequence length="729" mass="80152">MGDYGFGVLVQSNTGNKSAFPVRFHPHLQPPHHHQNATPSPAAFINNNTAANGSSAGSAWLFPAPATHNIQDEILGSEKAKSQQQEQQDPLEKQQLSPSPGQEAGILPETEKAKSEENQGDNSSENGNGKEKIRIESPVLTGFDYQEATGLGTSTQPLTSSASSLTGFSNWSAAIAPSSSTIINEDASFFHQGGVPAASANNGALLFQNFPHHVSPGFGGSFSPQIGPLSQHHPHHPHFQHHHSQHQQQRRSPASPHPPPFTHRNAAFNQLPHLANNLNKPPSPWSSYQSPSPTPSSSWSPGGGGYGGWGGSQGRDHRRGLNGGITPLNSISPLKKNFASNHIQLQKYARPSSAFAPKSWMEDSLNRADNIFPFPDRPRTFDMHSLESSLIDIMRAENDTIKGRLNYSYPGSDSSLLINARTYGRRRGQSSLFPMEDGFLDDGRGDQPLHSGLGSPHCFSHQNGERVERYSRKVFVGGLPPDIDEDEITASFRRFGPLIVDWPHKAESKSYFPPKGYAFLLFQDESSVQALIDACIEEDGKLYLCVSSPTIKDKPVQIRPWNLSDSDFVMDGSQPLDPRKTIFVGGVPRPLRAVELAMIMDRLYGGVCYAGIDTDPELKYPKGAGRVAFSNQQSYIAAISARFVQLQHGEIDKRVEVKPYVLDDQLCDECQGARCGGKFAPFFCANVTCLQYYCEYCWAAIHSRAGREFHKPLVKEGGDRPRHISFRWN</sequence>
<evidence type="ECO:0000250" key="1">
    <source>
        <dbReference type="UniProtKB" id="Q7TN98"/>
    </source>
</evidence>
<evidence type="ECO:0000250" key="2">
    <source>
        <dbReference type="UniProtKB" id="Q9BZB8"/>
    </source>
</evidence>
<evidence type="ECO:0000255" key="3">
    <source>
        <dbReference type="PROSITE-ProRule" id="PRU00176"/>
    </source>
</evidence>
<evidence type="ECO:0000256" key="4">
    <source>
        <dbReference type="SAM" id="MobiDB-lite"/>
    </source>
</evidence>
<evidence type="ECO:0000269" key="5">
    <source>
    </source>
</evidence>
<evidence type="ECO:0000269" key="6">
    <source>
    </source>
</evidence>
<evidence type="ECO:0000269" key="7">
    <source>
    </source>
</evidence>
<evidence type="ECO:0000269" key="8">
    <source>
    </source>
</evidence>
<evidence type="ECO:0000269" key="9">
    <source>
    </source>
</evidence>
<evidence type="ECO:0000303" key="10">
    <source>
    </source>
</evidence>
<evidence type="ECO:0000303" key="11">
    <source>
    </source>
</evidence>
<evidence type="ECO:0000305" key="12"/>
<evidence type="ECO:0007744" key="13">
    <source>
        <dbReference type="PDB" id="5DIF"/>
    </source>
</evidence>
<evidence type="ECO:0007744" key="14">
    <source>
    </source>
</evidence>
<evidence type="ECO:0007744" key="15">
    <source>
    </source>
</evidence>
<evidence type="ECO:0007744" key="16">
    <source>
    </source>
</evidence>
<evidence type="ECO:0007744" key="17">
    <source>
    </source>
</evidence>
<evidence type="ECO:0007829" key="18">
    <source>
        <dbReference type="PDB" id="2MKI"/>
    </source>
</evidence>
<evidence type="ECO:0007829" key="19">
    <source>
        <dbReference type="PDB" id="2MKJ"/>
    </source>
</evidence>
<evidence type="ECO:0007829" key="20">
    <source>
        <dbReference type="PDB" id="5DIF"/>
    </source>
</evidence>
<gene>
    <name type="primary">CPEB4</name>
    <name type="synonym">KIAA1673</name>
</gene>
<name>CPEB4_HUMAN</name>
<comment type="function">
    <text evidence="1 6 7 8 9">Sequence-specific RNA-binding protein that binds to the cytoplasmic polyadenylation element (CPE), an uridine-rich sequence element (consensus sequence 5'-UUUUUAU-3') within the mRNA 3'-UTR (PubMed:24990967). RNA binding results in a clear conformational change analogous to the Venus fly trap mechanism (PubMed:24990967). Regulates activation of unfolded protein response (UPR) in the process of adaptation to ER stress in liver, by maintaining translation of CPE-regulated mRNAs in conditions in which global protein synthesis is inhibited (By similarity). Required for cell cycle progression, specifically for cytokinesis and chromosomal segregation (PubMed:26398195). Plays a role as an oncogene promoting tumor growth and progression by positively regulating translation of t-plasminogen activator/PLAT (PubMed:22138752). Stimulates proliferation of melanocytes (PubMed:27857118). In contrast to CPEB1 and CPEB3, does not play role in synaptic plasticity, learning and memory (By similarity).</text>
</comment>
<comment type="subunit">
    <text evidence="5">Interacts with TOB1.</text>
</comment>
<comment type="interaction">
    <interactant intactId="EBI-2848203">
        <id>Q17RY0</id>
    </interactant>
    <interactant intactId="EBI-723281">
        <id>P50616</id>
        <label>TOB1</label>
    </interactant>
    <organismsDiffer>false</organismsDiffer>
    <experiments>2</experiments>
</comment>
<comment type="subcellular location">
    <subcellularLocation>
        <location evidence="1">Cytoplasm</location>
    </subcellularLocation>
    <subcellularLocation>
        <location evidence="1">Cell projection</location>
        <location evidence="1">Dendrite</location>
    </subcellularLocation>
    <subcellularLocation>
        <location evidence="1">Cell projection</location>
        <location evidence="1">Dendritic spine</location>
    </subcellularLocation>
    <subcellularLocation>
        <location evidence="1">Postsynaptic density</location>
    </subcellularLocation>
    <subcellularLocation>
        <location evidence="1">Cell projection</location>
        <location evidence="1">Axon</location>
    </subcellularLocation>
    <subcellularLocation>
        <location evidence="1">Cell projection</location>
        <location evidence="1">Growth cone</location>
    </subcellularLocation>
    <subcellularLocation>
        <location evidence="1">Endoplasmic reticulum</location>
    </subcellularLocation>
    <subcellularLocation>
        <location evidence="1">Cytoplasm</location>
        <location evidence="1">Perinuclear region</location>
    </subcellularLocation>
</comment>
<comment type="alternative products">
    <event type="alternative splicing"/>
    <isoform>
        <id>Q17RY0-1</id>
        <name>1</name>
        <sequence type="displayed"/>
    </isoform>
    <isoform>
        <id>Q17RY0-2</id>
        <name>2</name>
        <sequence type="described" ref="VSP_022041"/>
    </isoform>
    <isoform>
        <id>Q17RY0-3</id>
        <name>3</name>
        <sequence type="described" ref="VSP_022040 VSP_022042"/>
    </isoform>
</comment>
<comment type="tissue specificity">
    <text evidence="6 9">Expressed in pancreas in islets and ductal cells (at protein level) (PubMed:22138752). Expressed in melanocytes (PubMed:27857118).</text>
</comment>
<comment type="domain">
    <text evidence="2 7">The 2 RRM domains and the C-terminal region mediate interaction with CPE-containing RNA (PubMed:24990967). The interdomain linker (564-579) acts as a hinge to fix the relative orientation of the 2 RRMs (PubMed:24990967). The ZZ domain (509-566) coordinates 2 Zn ions and is probably implicated in mediating interactions with other proteins in addition to increasing the affinity of the RRMs for the CPEs (By similarity). Unlike in CPEB1, a continuous polar interface is formed between the 2 RRMs (PubMed:24990967).</text>
</comment>
<comment type="similarity">
    <text evidence="12">Belongs to the RRM CPEB family.</text>
</comment>
<organism>
    <name type="scientific">Homo sapiens</name>
    <name type="common">Human</name>
    <dbReference type="NCBI Taxonomy" id="9606"/>
    <lineage>
        <taxon>Eukaryota</taxon>
        <taxon>Metazoa</taxon>
        <taxon>Chordata</taxon>
        <taxon>Craniata</taxon>
        <taxon>Vertebrata</taxon>
        <taxon>Euteleostomi</taxon>
        <taxon>Mammalia</taxon>
        <taxon>Eutheria</taxon>
        <taxon>Euarchontoglires</taxon>
        <taxon>Primates</taxon>
        <taxon>Haplorrhini</taxon>
        <taxon>Catarrhini</taxon>
        <taxon>Hominidae</taxon>
        <taxon>Homo</taxon>
    </lineage>
</organism>
<protein>
    <recommendedName>
        <fullName>Cytoplasmic polyadenylation element-binding protein 4</fullName>
        <shortName>CPE-BP4</shortName>
        <shortName>CPE-binding protein 4</shortName>
        <shortName>hCPEB-4</shortName>
    </recommendedName>
</protein>
<reference key="1">
    <citation type="journal article" date="2000" name="DNA Res.">
        <title>Prediction of the coding sequences of unidentified human genes. XIX. The complete sequences of 100 new cDNA clones from brain which code for large proteins in vitro.</title>
        <authorList>
            <person name="Nagase T."/>
            <person name="Kikuno R."/>
            <person name="Hattori A."/>
            <person name="Kondo Y."/>
            <person name="Okumura K."/>
            <person name="Ohara O."/>
        </authorList>
    </citation>
    <scope>NUCLEOTIDE SEQUENCE [LARGE SCALE MRNA] (ISOFORM 2)</scope>
    <source>
        <tissue>Brain</tissue>
    </source>
</reference>
<reference key="2">
    <citation type="journal article" date="2007" name="BMC Genomics">
        <title>The full-ORF clone resource of the German cDNA consortium.</title>
        <authorList>
            <person name="Bechtel S."/>
            <person name="Rosenfelder H."/>
            <person name="Duda A."/>
            <person name="Schmidt C.P."/>
            <person name="Ernst U."/>
            <person name="Wellenreuther R."/>
            <person name="Mehrle A."/>
            <person name="Schuster C."/>
            <person name="Bahr A."/>
            <person name="Bloecker H."/>
            <person name="Heubner D."/>
            <person name="Hoerlein A."/>
            <person name="Michel G."/>
            <person name="Wedler H."/>
            <person name="Koehrer K."/>
            <person name="Ottenwaelder B."/>
            <person name="Poustka A."/>
            <person name="Wiemann S."/>
            <person name="Schupp I."/>
        </authorList>
    </citation>
    <scope>NUCLEOTIDE SEQUENCE [LARGE SCALE MRNA] (ISOFORM 1)</scope>
    <source>
        <tissue>Amygdala</tissue>
    </source>
</reference>
<reference key="3">
    <citation type="submission" date="2005-09" db="EMBL/GenBank/DDBJ databases">
        <authorList>
            <person name="Mural R.J."/>
            <person name="Istrail S."/>
            <person name="Sutton G.G."/>
            <person name="Florea L."/>
            <person name="Halpern A.L."/>
            <person name="Mobarry C.M."/>
            <person name="Lippert R."/>
            <person name="Walenz B."/>
            <person name="Shatkay H."/>
            <person name="Dew I."/>
            <person name="Miller J.R."/>
            <person name="Flanigan M.J."/>
            <person name="Edwards N.J."/>
            <person name="Bolanos R."/>
            <person name="Fasulo D."/>
            <person name="Halldorsson B.V."/>
            <person name="Hannenhalli S."/>
            <person name="Turner R."/>
            <person name="Yooseph S."/>
            <person name="Lu F."/>
            <person name="Nusskern D.R."/>
            <person name="Shue B.C."/>
            <person name="Zheng X.H."/>
            <person name="Zhong F."/>
            <person name="Delcher A.L."/>
            <person name="Huson D.H."/>
            <person name="Kravitz S.A."/>
            <person name="Mouchard L."/>
            <person name="Reinert K."/>
            <person name="Remington K.A."/>
            <person name="Clark A.G."/>
            <person name="Waterman M.S."/>
            <person name="Eichler E.E."/>
            <person name="Adams M.D."/>
            <person name="Hunkapiller M.W."/>
            <person name="Myers E.W."/>
            <person name="Venter J.C."/>
        </authorList>
    </citation>
    <scope>NUCLEOTIDE SEQUENCE [LARGE SCALE GENOMIC DNA]</scope>
</reference>
<reference key="4">
    <citation type="journal article" date="2004" name="Genome Res.">
        <title>The status, quality, and expansion of the NIH full-length cDNA project: the Mammalian Gene Collection (MGC).</title>
        <authorList>
            <consortium name="The MGC Project Team"/>
        </authorList>
    </citation>
    <scope>NUCLEOTIDE SEQUENCE [LARGE SCALE MRNA] (ISOFORMS 1; 2 AND 3)</scope>
    <source>
        <tissue>Brain</tissue>
        <tissue>Lymphoma</tissue>
    </source>
</reference>
<reference key="5">
    <citation type="journal article" date="2008" name="Proc. Natl. Acad. Sci. U.S.A.">
        <title>A quantitative atlas of mitotic phosphorylation.</title>
        <authorList>
            <person name="Dephoure N."/>
            <person name="Zhou C."/>
            <person name="Villen J."/>
            <person name="Beausoleil S.A."/>
            <person name="Bakalarski C.E."/>
            <person name="Elledge S.J."/>
            <person name="Gygi S.P."/>
        </authorList>
    </citation>
    <scope>PHOSPHORYLATION [LARGE SCALE ANALYSIS] AT SER-252; SER-255 AND THR-326</scope>
    <scope>IDENTIFICATION BY MASS SPECTROMETRY [LARGE SCALE ANALYSIS]</scope>
    <source>
        <tissue>Cervix carcinoma</tissue>
    </source>
</reference>
<reference key="6">
    <citation type="journal article" date="2010" name="Sci. Signal.">
        <title>Quantitative phosphoproteomics reveals widespread full phosphorylation site occupancy during mitosis.</title>
        <authorList>
            <person name="Olsen J.V."/>
            <person name="Vermeulen M."/>
            <person name="Santamaria A."/>
            <person name="Kumar C."/>
            <person name="Miller M.L."/>
            <person name="Jensen L.J."/>
            <person name="Gnad F."/>
            <person name="Cox J."/>
            <person name="Jensen T.S."/>
            <person name="Nigg E.A."/>
            <person name="Brunak S."/>
            <person name="Mann M."/>
        </authorList>
    </citation>
    <scope>PHOSPHORYLATION [LARGE SCALE ANALYSIS] AT SER-252; SER-255; SER-330 AND SER-332</scope>
    <scope>IDENTIFICATION BY MASS SPECTROMETRY [LARGE SCALE ANALYSIS]</scope>
    <source>
        <tissue>Cervix carcinoma</tissue>
    </source>
</reference>
<reference key="7">
    <citation type="journal article" date="2011" name="EMBO J.">
        <title>Anti-proliferative protein Tob negatively regulates CPEB3 target by recruiting Caf1 deadenylase.</title>
        <authorList>
            <person name="Hosoda N."/>
            <person name="Funakoshi Y."/>
            <person name="Hirasawa M."/>
            <person name="Yamagishi R."/>
            <person name="Asano Y."/>
            <person name="Miyagawa R."/>
            <person name="Ogami K."/>
            <person name="Tsujimoto M."/>
            <person name="Hoshino S."/>
        </authorList>
    </citation>
    <scope>INTERACTION WITH TOB1</scope>
</reference>
<reference key="8">
    <citation type="journal article" date="2011" name="Nat. Med.">
        <title>Key contribution of CPEB4-mediated translational control to cancer progression.</title>
        <authorList>
            <person name="Ortiz-Zapater E."/>
            <person name="Pineda D."/>
            <person name="Martinez-Bosch N."/>
            <person name="Fernandez-Miranda G."/>
            <person name="Iglesias M."/>
            <person name="Alameda F."/>
            <person name="Moreno M."/>
            <person name="Eliscovich C."/>
            <person name="Eyras E."/>
            <person name="Real F.X."/>
            <person name="Mendez R."/>
            <person name="Navarro P."/>
        </authorList>
    </citation>
    <scope>FUNCTION</scope>
    <scope>TISSUE SPECIFICITY</scope>
</reference>
<reference key="9">
    <citation type="journal article" date="2013" name="J. Proteome Res.">
        <title>Toward a comprehensive characterization of a human cancer cell phosphoproteome.</title>
        <authorList>
            <person name="Zhou H."/>
            <person name="Di Palma S."/>
            <person name="Preisinger C."/>
            <person name="Peng M."/>
            <person name="Polat A.N."/>
            <person name="Heck A.J."/>
            <person name="Mohammed S."/>
        </authorList>
    </citation>
    <scope>PHOSPHORYLATION [LARGE SCALE ANALYSIS] AT SER-97; SER-99 AND SER-332</scope>
    <scope>IDENTIFICATION BY MASS SPECTROMETRY [LARGE SCALE ANALYSIS]</scope>
    <source>
        <tissue>Cervix carcinoma</tissue>
        <tissue>Erythroleukemia</tissue>
    </source>
</reference>
<reference key="10">
    <citation type="journal article" date="2014" name="J. Proteomics">
        <title>An enzyme assisted RP-RPLC approach for in-depth analysis of human liver phosphoproteome.</title>
        <authorList>
            <person name="Bian Y."/>
            <person name="Song C."/>
            <person name="Cheng K."/>
            <person name="Dong M."/>
            <person name="Wang F."/>
            <person name="Huang J."/>
            <person name="Sun D."/>
            <person name="Wang L."/>
            <person name="Ye M."/>
            <person name="Zou H."/>
        </authorList>
    </citation>
    <scope>PHOSPHORYLATION [LARGE SCALE ANALYSIS] AT SER-97; SER-99 AND SER-137</scope>
    <scope>IDENTIFICATION BY MASS SPECTROMETRY [LARGE SCALE ANALYSIS]</scope>
    <source>
        <tissue>Liver</tissue>
    </source>
</reference>
<reference key="11">
    <citation type="journal article" date="2015" name="PLoS ONE">
        <title>Global analysis of CPEBs reveals sequential and non-redundant functions in mitotic cell cycle.</title>
        <authorList>
            <person name="Giangarra V."/>
            <person name="Igea A."/>
            <person name="Castellazzi C.L."/>
            <person name="Bava F.A."/>
            <person name="Mendez R."/>
        </authorList>
    </citation>
    <scope>FUNCTION</scope>
</reference>
<reference key="12">
    <citation type="journal article" date="2016" name="Nat. Commun.">
        <title>Lineage-specific roles of the cytoplasmic polyadenylation factor CPEB4 in the regulation of melanoma drivers.</title>
        <authorList>
            <person name="Perez-Guijarro E."/>
            <person name="Karras P."/>
            <person name="Cifdaloz M."/>
            <person name="Martinez-Herranz R."/>
            <person name="Canon E."/>
            <person name="Grana O."/>
            <person name="Horcajada-Reales C."/>
            <person name="Alonso-Curbelo D."/>
            <person name="Calvo T.G."/>
            <person name="Gomez-Lopez G."/>
            <person name="Bellora N."/>
            <person name="Riveiro-Falkenbach E."/>
            <person name="Ortiz-Romero P.L."/>
            <person name="Rodriguez-Peralto J.L."/>
            <person name="Maestre L."/>
            <person name="Roncador G."/>
            <person name="de Agustin Asensio J.C."/>
            <person name="Goding C.R."/>
            <person name="Eyras E."/>
            <person name="Megias D."/>
            <person name="Mendez R."/>
            <person name="Soengas M.S."/>
        </authorList>
    </citation>
    <scope>FUNCTION</scope>
    <scope>TISSUE SPECIFICITY</scope>
</reference>
<reference key="13">
    <citation type="journal article" date="2014" name="Genes Dev.">
        <title>A fly trap mechanism provides sequence-specific RNA recognition by CPEB proteins.</title>
        <authorList>
            <person name="Afroz T."/>
            <person name="Skrisovska L."/>
            <person name="Belloc E."/>
            <person name="Guillen-Boixet J."/>
            <person name="Mendez R."/>
            <person name="Allain F.H."/>
        </authorList>
    </citation>
    <scope>FUNCTION</scope>
    <scope>STRUCTURE BY NMR OF 460-662 ALONE OR IN COMPLEX WITH RNA AND ZINC</scope>
    <scope>DOMAIN</scope>
</reference>
<reference key="14">
    <citation type="journal article" date="2015" name="Elife">
        <title>Structural determinants of nuclear export signal orientation in binding to exportin CRM1.</title>
        <authorList>
            <person name="Fung H.Y."/>
            <person name="Fu S.C."/>
            <person name="Brautigam C.A."/>
            <person name="Chook Y.M."/>
        </authorList>
    </citation>
    <scope>X-RAY CRYSTALLOGRAPHY (2.09 ANGSTROMS) OF 379-393</scope>
</reference>
<proteinExistence type="evidence at protein level"/>
<accession>Q17RY0</accession>
<accession>B7ZLQ7</accession>
<accession>Q7Z310</accession>
<accession>Q8N405</accession>
<accession>Q9C0J0</accession>
<feature type="chain" id="PRO_0000269264" description="Cytoplasmic polyadenylation element-binding protein 4">
    <location>
        <begin position="1"/>
        <end position="729"/>
    </location>
</feature>
<feature type="domain" description="RRM 1" evidence="3">
    <location>
        <begin position="472"/>
        <end position="563"/>
    </location>
</feature>
<feature type="domain" description="RRM 2" evidence="3">
    <location>
        <begin position="580"/>
        <end position="662"/>
    </location>
</feature>
<feature type="region of interest" description="Disordered" evidence="4">
    <location>
        <begin position="20"/>
        <end position="49"/>
    </location>
</feature>
<feature type="region of interest" description="Disordered" evidence="4">
    <location>
        <begin position="78"/>
        <end position="133"/>
    </location>
</feature>
<feature type="region of interest" description="Disordered" evidence="4">
    <location>
        <begin position="218"/>
        <end position="328"/>
    </location>
</feature>
<feature type="region of interest" description="RNA-binding" evidence="13">
    <location>
        <begin position="541"/>
        <end position="543"/>
    </location>
</feature>
<feature type="compositionally biased region" description="Basic residues" evidence="4">
    <location>
        <begin position="24"/>
        <end position="35"/>
    </location>
</feature>
<feature type="compositionally biased region" description="Low complexity" evidence="4">
    <location>
        <begin position="83"/>
        <end position="96"/>
    </location>
</feature>
<feature type="compositionally biased region" description="Basic residues" evidence="4">
    <location>
        <begin position="232"/>
        <end position="249"/>
    </location>
</feature>
<feature type="compositionally biased region" description="Low complexity" evidence="4">
    <location>
        <begin position="285"/>
        <end position="300"/>
    </location>
</feature>
<feature type="compositionally biased region" description="Gly residues" evidence="4">
    <location>
        <begin position="301"/>
        <end position="313"/>
    </location>
</feature>
<feature type="binding site" evidence="2">
    <location>
        <position position="667"/>
    </location>
    <ligand>
        <name>Zn(2+)</name>
        <dbReference type="ChEBI" id="CHEBI:29105"/>
        <label>1</label>
    </ligand>
</feature>
<feature type="binding site" evidence="2">
    <location>
        <position position="675"/>
    </location>
    <ligand>
        <name>Zn(2+)</name>
        <dbReference type="ChEBI" id="CHEBI:29105"/>
        <label>1</label>
    </ligand>
</feature>
<feature type="binding site" evidence="2">
    <location>
        <position position="684"/>
    </location>
    <ligand>
        <name>Zn(2+)</name>
        <dbReference type="ChEBI" id="CHEBI:29105"/>
        <label>2</label>
    </ligand>
</feature>
<feature type="binding site" evidence="2">
    <location>
        <position position="689"/>
    </location>
    <ligand>
        <name>Zn(2+)</name>
        <dbReference type="ChEBI" id="CHEBI:29105"/>
        <label>2</label>
    </ligand>
</feature>
<feature type="binding site" evidence="2">
    <location>
        <position position="694"/>
    </location>
    <ligand>
        <name>Zn(2+)</name>
        <dbReference type="ChEBI" id="CHEBI:29105"/>
        <label>1</label>
    </ligand>
</feature>
<feature type="binding site" evidence="2">
    <location>
        <position position="697"/>
    </location>
    <ligand>
        <name>Zn(2+)</name>
        <dbReference type="ChEBI" id="CHEBI:29105"/>
        <label>1</label>
    </ligand>
</feature>
<feature type="binding site" evidence="2">
    <location>
        <position position="702"/>
    </location>
    <ligand>
        <name>Zn(2+)</name>
        <dbReference type="ChEBI" id="CHEBI:29105"/>
        <label>2</label>
    </ligand>
</feature>
<feature type="binding site" evidence="2">
    <location>
        <position position="710"/>
    </location>
    <ligand>
        <name>Zn(2+)</name>
        <dbReference type="ChEBI" id="CHEBI:29105"/>
        <label>2</label>
    </ligand>
</feature>
<feature type="site" description="RNA-binding" evidence="13">
    <location>
        <position position="473"/>
    </location>
</feature>
<feature type="site" description="Important for the positionning of RRM1 relative to RRM2" evidence="7">
    <location>
        <position position="561"/>
    </location>
</feature>
<feature type="modified residue" description="Phosphoserine" evidence="16 17">
    <location>
        <position position="97"/>
    </location>
</feature>
<feature type="modified residue" description="Phosphoserine" evidence="16 17">
    <location>
        <position position="99"/>
    </location>
</feature>
<feature type="modified residue" description="Phosphoserine" evidence="17">
    <location>
        <position position="137"/>
    </location>
</feature>
<feature type="modified residue" description="Phosphoserine" evidence="14 15">
    <location>
        <position position="252"/>
    </location>
</feature>
<feature type="modified residue" description="Phosphoserine" evidence="14 15">
    <location>
        <position position="255"/>
    </location>
</feature>
<feature type="modified residue" description="Phosphothreonine" evidence="14">
    <location>
        <position position="326"/>
    </location>
</feature>
<feature type="modified residue" description="Phosphoserine" evidence="15">
    <location>
        <position position="330"/>
    </location>
</feature>
<feature type="modified residue" description="Phosphoserine" evidence="15 16">
    <location>
        <position position="332"/>
    </location>
</feature>
<feature type="splice variant" id="VSP_022040" description="In isoform 3." evidence="11">
    <location>
        <begin position="1"/>
        <end position="382"/>
    </location>
</feature>
<feature type="splice variant" id="VSP_022041" description="In isoform 2." evidence="10 11">
    <location>
        <begin position="403"/>
        <end position="419"/>
    </location>
</feature>
<feature type="splice variant" id="VSP_022042" description="In isoform 3." evidence="11">
    <location>
        <begin position="404"/>
        <end position="428"/>
    </location>
</feature>
<feature type="sequence conflict" description="In Ref. 2; CAD98072." evidence="12" ref="2">
    <original>P</original>
    <variation>L</variation>
    <location>
        <position position="228"/>
    </location>
</feature>
<feature type="helix" evidence="20">
    <location>
        <begin position="384"/>
        <end position="391"/>
    </location>
</feature>
<feature type="strand" evidence="18">
    <location>
        <begin position="472"/>
        <end position="477"/>
    </location>
</feature>
<feature type="helix" evidence="18">
    <location>
        <begin position="485"/>
        <end position="491"/>
    </location>
</feature>
<feature type="helix" evidence="18">
    <location>
        <begin position="492"/>
        <end position="495"/>
    </location>
</feature>
<feature type="strand" evidence="18">
    <location>
        <begin position="499"/>
        <end position="501"/>
    </location>
</feature>
<feature type="turn" evidence="19">
    <location>
        <begin position="507"/>
        <end position="509"/>
    </location>
</feature>
<feature type="strand" evidence="18">
    <location>
        <begin position="514"/>
        <end position="516"/>
    </location>
</feature>
<feature type="strand" evidence="18">
    <location>
        <begin position="518"/>
        <end position="521"/>
    </location>
</feature>
<feature type="helix" evidence="18">
    <location>
        <begin position="527"/>
        <end position="533"/>
    </location>
</feature>
<feature type="strand" evidence="18">
    <location>
        <begin position="534"/>
        <end position="538"/>
    </location>
</feature>
<feature type="strand" evidence="18">
    <location>
        <begin position="541"/>
        <end position="544"/>
    </location>
</feature>
<feature type="strand" evidence="18">
    <location>
        <begin position="556"/>
        <end position="560"/>
    </location>
</feature>
<feature type="strand" evidence="18">
    <location>
        <begin position="563"/>
        <end position="572"/>
    </location>
</feature>
<feature type="strand" evidence="18">
    <location>
        <begin position="580"/>
        <end position="586"/>
    </location>
</feature>
<feature type="strand" evidence="19">
    <location>
        <begin position="589"/>
        <end position="591"/>
    </location>
</feature>
<feature type="helix" evidence="18">
    <location>
        <begin position="593"/>
        <end position="603"/>
    </location>
</feature>
<feature type="strand" evidence="18">
    <location>
        <begin position="607"/>
        <end position="615"/>
    </location>
</feature>
<feature type="turn" evidence="18">
    <location>
        <begin position="616"/>
        <end position="619"/>
    </location>
</feature>
<feature type="strand" evidence="18">
    <location>
        <begin position="620"/>
        <end position="631"/>
    </location>
</feature>
<feature type="helix" evidence="18">
    <location>
        <begin position="632"/>
        <end position="638"/>
    </location>
</feature>
<feature type="strand" evidence="18">
    <location>
        <begin position="639"/>
        <end position="643"/>
    </location>
</feature>
<feature type="strand" evidence="19">
    <location>
        <begin position="645"/>
        <end position="648"/>
    </location>
</feature>
<feature type="strand" evidence="19">
    <location>
        <begin position="651"/>
        <end position="653"/>
    </location>
</feature>
<feature type="strand" evidence="18">
    <location>
        <begin position="656"/>
        <end position="659"/>
    </location>
</feature>
<dbReference type="EMBL" id="AB051460">
    <property type="protein sequence ID" value="BAB21764.1"/>
    <property type="molecule type" value="mRNA"/>
</dbReference>
<dbReference type="EMBL" id="BX538213">
    <property type="protein sequence ID" value="CAD98072.1"/>
    <property type="molecule type" value="mRNA"/>
</dbReference>
<dbReference type="EMBL" id="CH471062">
    <property type="protein sequence ID" value="EAW61392.1"/>
    <property type="molecule type" value="Genomic_DNA"/>
</dbReference>
<dbReference type="EMBL" id="BC036899">
    <property type="protein sequence ID" value="AAH36899.1"/>
    <property type="molecule type" value="mRNA"/>
</dbReference>
<dbReference type="EMBL" id="BC117150">
    <property type="protein sequence ID" value="AAI17151.1"/>
    <property type="molecule type" value="mRNA"/>
</dbReference>
<dbReference type="EMBL" id="BC143958">
    <property type="protein sequence ID" value="AAI43959.1"/>
    <property type="molecule type" value="mRNA"/>
</dbReference>
<dbReference type="CCDS" id="CCDS4390.1">
    <molecule id="Q17RY0-1"/>
</dbReference>
<dbReference type="CCDS" id="CCDS78086.1">
    <molecule id="Q17RY0-2"/>
</dbReference>
<dbReference type="CCDS" id="CCDS83044.1">
    <molecule id="Q17RY0-3"/>
</dbReference>
<dbReference type="RefSeq" id="NP_001295118.1">
    <molecule id="Q17RY0-2"/>
    <property type="nucleotide sequence ID" value="NM_001308189.2"/>
</dbReference>
<dbReference type="RefSeq" id="NP_001295120.1">
    <property type="nucleotide sequence ID" value="NM_001308191.1"/>
</dbReference>
<dbReference type="RefSeq" id="NP_001295121.1">
    <property type="nucleotide sequence ID" value="NM_001308192.1"/>
</dbReference>
<dbReference type="RefSeq" id="NP_001295122.1">
    <molecule id="Q17RY0-3"/>
    <property type="nucleotide sequence ID" value="NM_001308193.2"/>
</dbReference>
<dbReference type="RefSeq" id="NP_085130.2">
    <molecule id="Q17RY0-1"/>
    <property type="nucleotide sequence ID" value="NM_030627.4"/>
</dbReference>
<dbReference type="PDB" id="2MKI">
    <property type="method" value="NMR"/>
    <property type="chains" value="A=460-662"/>
</dbReference>
<dbReference type="PDB" id="2MKJ">
    <property type="method" value="NMR"/>
    <property type="chains" value="A=460-662"/>
</dbReference>
<dbReference type="PDB" id="5DIF">
    <property type="method" value="X-ray"/>
    <property type="resolution" value="2.09 A"/>
    <property type="chains" value="D=379-393"/>
</dbReference>
<dbReference type="PDBsum" id="2MKI"/>
<dbReference type="PDBsum" id="2MKJ"/>
<dbReference type="PDBsum" id="5DIF"/>
<dbReference type="BMRB" id="Q17RY0"/>
<dbReference type="SMR" id="Q17RY0"/>
<dbReference type="BioGRID" id="123228">
    <property type="interactions" value="152"/>
</dbReference>
<dbReference type="FunCoup" id="Q17RY0">
    <property type="interactions" value="626"/>
</dbReference>
<dbReference type="IntAct" id="Q17RY0">
    <property type="interactions" value="16"/>
</dbReference>
<dbReference type="MINT" id="Q17RY0"/>
<dbReference type="STRING" id="9606.ENSP00000265085"/>
<dbReference type="GlyGen" id="Q17RY0">
    <property type="glycosylation" value="2 sites, 1 O-linked glycan (1 site)"/>
</dbReference>
<dbReference type="iPTMnet" id="Q17RY0"/>
<dbReference type="PhosphoSitePlus" id="Q17RY0"/>
<dbReference type="BioMuta" id="CPEB4"/>
<dbReference type="DMDM" id="119368635"/>
<dbReference type="jPOST" id="Q17RY0"/>
<dbReference type="MassIVE" id="Q17RY0"/>
<dbReference type="PaxDb" id="9606-ENSP00000265085"/>
<dbReference type="PeptideAtlas" id="Q17RY0"/>
<dbReference type="ProteomicsDB" id="61171">
    <molecule id="Q17RY0-1"/>
</dbReference>
<dbReference type="ProteomicsDB" id="61172">
    <molecule id="Q17RY0-2"/>
</dbReference>
<dbReference type="ProteomicsDB" id="61173">
    <molecule id="Q17RY0-3"/>
</dbReference>
<dbReference type="Pumba" id="Q17RY0"/>
<dbReference type="Antibodypedia" id="28980">
    <property type="antibodies" value="149 antibodies from 23 providers"/>
</dbReference>
<dbReference type="DNASU" id="80315"/>
<dbReference type="Ensembl" id="ENST00000265085.10">
    <molecule id="Q17RY0-1"/>
    <property type="protein sequence ID" value="ENSP00000265085.5"/>
    <property type="gene ID" value="ENSG00000113742.14"/>
</dbReference>
<dbReference type="Ensembl" id="ENST00000334035.9">
    <molecule id="Q17RY0-2"/>
    <property type="protein sequence ID" value="ENSP00000334533.5"/>
    <property type="gene ID" value="ENSG00000113742.14"/>
</dbReference>
<dbReference type="Ensembl" id="ENST00000517880.1">
    <molecule id="Q17RY0-3"/>
    <property type="protein sequence ID" value="ENSP00000427990.1"/>
    <property type="gene ID" value="ENSG00000113742.14"/>
</dbReference>
<dbReference type="GeneID" id="80315"/>
<dbReference type="KEGG" id="hsa:80315"/>
<dbReference type="MANE-Select" id="ENST00000265085.10">
    <property type="protein sequence ID" value="ENSP00000265085.5"/>
    <property type="RefSeq nucleotide sequence ID" value="NM_030627.4"/>
    <property type="RefSeq protein sequence ID" value="NP_085130.2"/>
</dbReference>
<dbReference type="UCSC" id="uc003mcs.5">
    <molecule id="Q17RY0-1"/>
    <property type="organism name" value="human"/>
</dbReference>
<dbReference type="AGR" id="HGNC:21747"/>
<dbReference type="CTD" id="80315"/>
<dbReference type="DisGeNET" id="80315"/>
<dbReference type="GeneCards" id="CPEB4"/>
<dbReference type="HGNC" id="HGNC:21747">
    <property type="gene designation" value="CPEB4"/>
</dbReference>
<dbReference type="HPA" id="ENSG00000113742">
    <property type="expression patterns" value="Low tissue specificity"/>
</dbReference>
<dbReference type="MIM" id="610607">
    <property type="type" value="gene"/>
</dbReference>
<dbReference type="neXtProt" id="NX_Q17RY0"/>
<dbReference type="OpenTargets" id="ENSG00000113742"/>
<dbReference type="PharmGKB" id="PA134869176"/>
<dbReference type="VEuPathDB" id="HostDB:ENSG00000113742"/>
<dbReference type="eggNOG" id="KOG0129">
    <property type="taxonomic scope" value="Eukaryota"/>
</dbReference>
<dbReference type="GeneTree" id="ENSGT00940000154998"/>
<dbReference type="HOGENOM" id="CLU_014948_2_1_1"/>
<dbReference type="InParanoid" id="Q17RY0"/>
<dbReference type="OMA" id="XRTYGRR"/>
<dbReference type="OrthoDB" id="10033548at2759"/>
<dbReference type="PAN-GO" id="Q17RY0">
    <property type="GO annotations" value="10 GO annotations based on evolutionary models"/>
</dbReference>
<dbReference type="PhylomeDB" id="Q17RY0"/>
<dbReference type="TreeFam" id="TF317658"/>
<dbReference type="PathwayCommons" id="Q17RY0"/>
<dbReference type="SignaLink" id="Q17RY0"/>
<dbReference type="BioGRID-ORCS" id="80315">
    <property type="hits" value="21 hits in 1167 CRISPR screens"/>
</dbReference>
<dbReference type="CD-CODE" id="232F8A39">
    <property type="entry name" value="P-body"/>
</dbReference>
<dbReference type="CD-CODE" id="D8E9712B">
    <property type="entry name" value="Neuronal RNP granule"/>
</dbReference>
<dbReference type="CD-CODE" id="DEE660B4">
    <property type="entry name" value="Stress granule"/>
</dbReference>
<dbReference type="ChiTaRS" id="CPEB4">
    <property type="organism name" value="human"/>
</dbReference>
<dbReference type="EvolutionaryTrace" id="Q17RY0"/>
<dbReference type="GenomeRNAi" id="80315"/>
<dbReference type="Pharos" id="Q17RY0">
    <property type="development level" value="Tbio"/>
</dbReference>
<dbReference type="PRO" id="PR:Q17RY0"/>
<dbReference type="Proteomes" id="UP000005640">
    <property type="component" value="Chromosome 5"/>
</dbReference>
<dbReference type="RNAct" id="Q17RY0">
    <property type="molecule type" value="protein"/>
</dbReference>
<dbReference type="Bgee" id="ENSG00000113742">
    <property type="expression patterns" value="Expressed in adrenal tissue and 192 other cell types or tissues"/>
</dbReference>
<dbReference type="ExpressionAtlas" id="Q17RY0">
    <property type="expression patterns" value="baseline and differential"/>
</dbReference>
<dbReference type="GO" id="GO:0005737">
    <property type="term" value="C:cytoplasm"/>
    <property type="evidence" value="ECO:0000314"/>
    <property type="project" value="UniProtKB"/>
</dbReference>
<dbReference type="GO" id="GO:0030425">
    <property type="term" value="C:dendrite"/>
    <property type="evidence" value="ECO:0000250"/>
    <property type="project" value="UniProtKB"/>
</dbReference>
<dbReference type="GO" id="GO:0043197">
    <property type="term" value="C:dendritic spine"/>
    <property type="evidence" value="ECO:0007669"/>
    <property type="project" value="UniProtKB-SubCell"/>
</dbReference>
<dbReference type="GO" id="GO:0005783">
    <property type="term" value="C:endoplasmic reticulum"/>
    <property type="evidence" value="ECO:0000250"/>
    <property type="project" value="UniProtKB"/>
</dbReference>
<dbReference type="GO" id="GO:0030426">
    <property type="term" value="C:growth cone"/>
    <property type="evidence" value="ECO:0007669"/>
    <property type="project" value="UniProtKB-SubCell"/>
</dbReference>
<dbReference type="GO" id="GO:0043005">
    <property type="term" value="C:neuron projection"/>
    <property type="evidence" value="ECO:0000318"/>
    <property type="project" value="GO_Central"/>
</dbReference>
<dbReference type="GO" id="GO:0005634">
    <property type="term" value="C:nucleus"/>
    <property type="evidence" value="ECO:0000314"/>
    <property type="project" value="UniProtKB"/>
</dbReference>
<dbReference type="GO" id="GO:0048471">
    <property type="term" value="C:perinuclear region of cytoplasm"/>
    <property type="evidence" value="ECO:0007669"/>
    <property type="project" value="UniProtKB-SubCell"/>
</dbReference>
<dbReference type="GO" id="GO:0014069">
    <property type="term" value="C:postsynaptic density"/>
    <property type="evidence" value="ECO:0000250"/>
    <property type="project" value="UniProtKB"/>
</dbReference>
<dbReference type="GO" id="GO:0045202">
    <property type="term" value="C:synapse"/>
    <property type="evidence" value="ECO:0000318"/>
    <property type="project" value="GO_Central"/>
</dbReference>
<dbReference type="GO" id="GO:0046872">
    <property type="term" value="F:metal ion binding"/>
    <property type="evidence" value="ECO:0007669"/>
    <property type="project" value="UniProtKB-KW"/>
</dbReference>
<dbReference type="GO" id="GO:0003730">
    <property type="term" value="F:mRNA 3'-UTR binding"/>
    <property type="evidence" value="ECO:0000318"/>
    <property type="project" value="GO_Central"/>
</dbReference>
<dbReference type="GO" id="GO:0000900">
    <property type="term" value="F:mRNA regulatory element binding translation repressor activity"/>
    <property type="evidence" value="ECO:0000318"/>
    <property type="project" value="GO_Central"/>
</dbReference>
<dbReference type="GO" id="GO:0043022">
    <property type="term" value="F:ribosome binding"/>
    <property type="evidence" value="ECO:0000318"/>
    <property type="project" value="GO_Central"/>
</dbReference>
<dbReference type="GO" id="GO:0003723">
    <property type="term" value="F:RNA binding"/>
    <property type="evidence" value="ECO:0007005"/>
    <property type="project" value="UniProtKB"/>
</dbReference>
<dbReference type="GO" id="GO:0008135">
    <property type="term" value="F:translation factor activity, RNA binding"/>
    <property type="evidence" value="ECO:0000318"/>
    <property type="project" value="GO_Central"/>
</dbReference>
<dbReference type="GO" id="GO:0071230">
    <property type="term" value="P:cellular response to amino acid stimulus"/>
    <property type="evidence" value="ECO:0000250"/>
    <property type="project" value="UniProtKB"/>
</dbReference>
<dbReference type="GO" id="GO:0036294">
    <property type="term" value="P:cellular response to decreased oxygen levels"/>
    <property type="evidence" value="ECO:0000250"/>
    <property type="project" value="UniProtKB"/>
</dbReference>
<dbReference type="GO" id="GO:0042149">
    <property type="term" value="P:cellular response to glucose starvation"/>
    <property type="evidence" value="ECO:0000250"/>
    <property type="project" value="UniProtKB"/>
</dbReference>
<dbReference type="GO" id="GO:0035235">
    <property type="term" value="P:ionotropic glutamate receptor signaling pathway"/>
    <property type="evidence" value="ECO:0000250"/>
    <property type="project" value="UniProtKB"/>
</dbReference>
<dbReference type="GO" id="GO:2000766">
    <property type="term" value="P:negative regulation of cytoplasmic translation"/>
    <property type="evidence" value="ECO:0000318"/>
    <property type="project" value="GO_Central"/>
</dbReference>
<dbReference type="GO" id="GO:0043524">
    <property type="term" value="P:negative regulation of neuron apoptotic process"/>
    <property type="evidence" value="ECO:0000250"/>
    <property type="project" value="UniProtKB"/>
</dbReference>
<dbReference type="GO" id="GO:0002931">
    <property type="term" value="P:response to ischemia"/>
    <property type="evidence" value="ECO:0000250"/>
    <property type="project" value="UniProtKB"/>
</dbReference>
<dbReference type="CDD" id="cd19757">
    <property type="entry name" value="Bbox1"/>
    <property type="match status" value="1"/>
</dbReference>
<dbReference type="CDD" id="cd12724">
    <property type="entry name" value="RRM1_CPEB2_like"/>
    <property type="match status" value="1"/>
</dbReference>
<dbReference type="CDD" id="cd12726">
    <property type="entry name" value="RRM2_CPEB2_like"/>
    <property type="match status" value="1"/>
</dbReference>
<dbReference type="FunFam" id="3.30.70.330:FF:000008">
    <property type="entry name" value="Cytoplasmic polyadenylation element-binding 2 isoform X2"/>
    <property type="match status" value="1"/>
</dbReference>
<dbReference type="FunFam" id="4.10.640.40:FF:000001">
    <property type="entry name" value="Cytoplasmic polyadenylation element-binding 2 isoform X2"/>
    <property type="match status" value="1"/>
</dbReference>
<dbReference type="FunFam" id="3.30.70.330:FF:000009">
    <property type="entry name" value="cytoplasmic polyadenylation element-binding protein 2 isoform X1"/>
    <property type="match status" value="1"/>
</dbReference>
<dbReference type="Gene3D" id="3.30.70.330">
    <property type="match status" value="2"/>
</dbReference>
<dbReference type="Gene3D" id="4.10.640.40">
    <property type="entry name" value="Cytoplasmic polyadenylation element-binding protein, ZZ domain"/>
    <property type="match status" value="1"/>
</dbReference>
<dbReference type="InterPro" id="IPR032296">
    <property type="entry name" value="CEBP_ZZ"/>
</dbReference>
<dbReference type="InterPro" id="IPR038446">
    <property type="entry name" value="CEBP_ZZ_sf"/>
</dbReference>
<dbReference type="InterPro" id="IPR034819">
    <property type="entry name" value="CPEB"/>
</dbReference>
<dbReference type="InterPro" id="IPR012677">
    <property type="entry name" value="Nucleotide-bd_a/b_plait_sf"/>
</dbReference>
<dbReference type="InterPro" id="IPR035979">
    <property type="entry name" value="RBD_domain_sf"/>
</dbReference>
<dbReference type="InterPro" id="IPR000504">
    <property type="entry name" value="RRM_dom"/>
</dbReference>
<dbReference type="PANTHER" id="PTHR12566">
    <property type="entry name" value="CYTOPLASMIC POLYADENYLATION ELEMENT BINDING PROTEIN CPEB"/>
    <property type="match status" value="1"/>
</dbReference>
<dbReference type="PANTHER" id="PTHR12566:SF2">
    <property type="entry name" value="CYTOPLASMIC POLYADENYLATION ELEMENT-BINDING PROTEIN 4"/>
    <property type="match status" value="1"/>
</dbReference>
<dbReference type="Pfam" id="PF16366">
    <property type="entry name" value="CEBP_ZZ"/>
    <property type="match status" value="1"/>
</dbReference>
<dbReference type="Pfam" id="PF16367">
    <property type="entry name" value="RRM_7"/>
    <property type="match status" value="1"/>
</dbReference>
<dbReference type="SMART" id="SM00360">
    <property type="entry name" value="RRM"/>
    <property type="match status" value="2"/>
</dbReference>
<dbReference type="SUPFAM" id="SSF54928">
    <property type="entry name" value="RNA-binding domain, RBD"/>
    <property type="match status" value="1"/>
</dbReference>
<dbReference type="PROSITE" id="PS50102">
    <property type="entry name" value="RRM"/>
    <property type="match status" value="2"/>
</dbReference>
<keyword id="KW-0002">3D-structure</keyword>
<keyword id="KW-0025">Alternative splicing</keyword>
<keyword id="KW-0966">Cell projection</keyword>
<keyword id="KW-0963">Cytoplasm</keyword>
<keyword id="KW-0256">Endoplasmic reticulum</keyword>
<keyword id="KW-0479">Metal-binding</keyword>
<keyword id="KW-0597">Phosphoprotein</keyword>
<keyword id="KW-1267">Proteomics identification</keyword>
<keyword id="KW-1185">Reference proteome</keyword>
<keyword id="KW-0677">Repeat</keyword>
<keyword id="KW-0694">RNA-binding</keyword>
<keyword id="KW-0770">Synapse</keyword>
<keyword id="KW-0862">Zinc</keyword>